<organism>
    <name type="scientific">Escherichia coli O157:H7</name>
    <dbReference type="NCBI Taxonomy" id="83334"/>
    <lineage>
        <taxon>Bacteria</taxon>
        <taxon>Pseudomonadati</taxon>
        <taxon>Pseudomonadota</taxon>
        <taxon>Gammaproteobacteria</taxon>
        <taxon>Enterobacterales</taxon>
        <taxon>Enterobacteriaceae</taxon>
        <taxon>Escherichia</taxon>
    </lineage>
</organism>
<protein>
    <recommendedName>
        <fullName evidence="1">Fumarate hydratase class II</fullName>
        <shortName evidence="1">Fumarase C</shortName>
        <ecNumber evidence="1">4.2.1.2</ecNumber>
    </recommendedName>
    <alternativeName>
        <fullName evidence="1">Aerobic fumarase</fullName>
    </alternativeName>
    <alternativeName>
        <fullName evidence="1">Iron-independent fumarase</fullName>
    </alternativeName>
</protein>
<feature type="chain" id="PRO_0000161276" description="Fumarate hydratase class II">
    <location>
        <begin position="1"/>
        <end position="467"/>
    </location>
</feature>
<feature type="active site" description="Proton donor/acceptor" evidence="1">
    <location>
        <position position="188"/>
    </location>
</feature>
<feature type="active site" evidence="1">
    <location>
        <position position="318"/>
    </location>
</feature>
<feature type="binding site" evidence="1">
    <location>
        <begin position="98"/>
        <end position="100"/>
    </location>
    <ligand>
        <name>substrate</name>
    </ligand>
</feature>
<feature type="binding site" evidence="1">
    <location>
        <position position="126"/>
    </location>
    <ligand>
        <name>substrate</name>
    </ligand>
</feature>
<feature type="binding site" description="in site B" evidence="1">
    <location>
        <begin position="129"/>
        <end position="132"/>
    </location>
    <ligand>
        <name>substrate</name>
    </ligand>
</feature>
<feature type="binding site" evidence="1">
    <location>
        <begin position="139"/>
        <end position="141"/>
    </location>
    <ligand>
        <name>substrate</name>
    </ligand>
</feature>
<feature type="binding site" evidence="1">
    <location>
        <position position="187"/>
    </location>
    <ligand>
        <name>substrate</name>
    </ligand>
</feature>
<feature type="binding site" evidence="1">
    <location>
        <position position="319"/>
    </location>
    <ligand>
        <name>substrate</name>
    </ligand>
</feature>
<feature type="binding site" evidence="1">
    <location>
        <begin position="324"/>
        <end position="326"/>
    </location>
    <ligand>
        <name>substrate</name>
    </ligand>
</feature>
<feature type="site" description="Important for catalytic activity" evidence="1">
    <location>
        <position position="331"/>
    </location>
</feature>
<gene>
    <name evidence="1" type="primary">fumC</name>
    <name type="ordered locus">Z2614</name>
    <name type="ordered locus">ECs2317</name>
</gene>
<proteinExistence type="inferred from homology"/>
<name>FUMC_ECO57</name>
<reference key="1">
    <citation type="journal article" date="2001" name="Nature">
        <title>Genome sequence of enterohaemorrhagic Escherichia coli O157:H7.</title>
        <authorList>
            <person name="Perna N.T."/>
            <person name="Plunkett G. III"/>
            <person name="Burland V."/>
            <person name="Mau B."/>
            <person name="Glasner J.D."/>
            <person name="Rose D.J."/>
            <person name="Mayhew G.F."/>
            <person name="Evans P.S."/>
            <person name="Gregor J."/>
            <person name="Kirkpatrick H.A."/>
            <person name="Posfai G."/>
            <person name="Hackett J."/>
            <person name="Klink S."/>
            <person name="Boutin A."/>
            <person name="Shao Y."/>
            <person name="Miller L."/>
            <person name="Grotbeck E.J."/>
            <person name="Davis N.W."/>
            <person name="Lim A."/>
            <person name="Dimalanta E.T."/>
            <person name="Potamousis K."/>
            <person name="Apodaca J."/>
            <person name="Anantharaman T.S."/>
            <person name="Lin J."/>
            <person name="Yen G."/>
            <person name="Schwartz D.C."/>
            <person name="Welch R.A."/>
            <person name="Blattner F.R."/>
        </authorList>
    </citation>
    <scope>NUCLEOTIDE SEQUENCE [LARGE SCALE GENOMIC DNA]</scope>
    <source>
        <strain>O157:H7 / EDL933 / ATCC 700927 / EHEC</strain>
    </source>
</reference>
<reference key="2">
    <citation type="journal article" date="2001" name="DNA Res.">
        <title>Complete genome sequence of enterohemorrhagic Escherichia coli O157:H7 and genomic comparison with a laboratory strain K-12.</title>
        <authorList>
            <person name="Hayashi T."/>
            <person name="Makino K."/>
            <person name="Ohnishi M."/>
            <person name="Kurokawa K."/>
            <person name="Ishii K."/>
            <person name="Yokoyama K."/>
            <person name="Han C.-G."/>
            <person name="Ohtsubo E."/>
            <person name="Nakayama K."/>
            <person name="Murata T."/>
            <person name="Tanaka M."/>
            <person name="Tobe T."/>
            <person name="Iida T."/>
            <person name="Takami H."/>
            <person name="Honda T."/>
            <person name="Sasakawa C."/>
            <person name="Ogasawara N."/>
            <person name="Yasunaga T."/>
            <person name="Kuhara S."/>
            <person name="Shiba T."/>
            <person name="Hattori M."/>
            <person name="Shinagawa H."/>
        </authorList>
    </citation>
    <scope>NUCLEOTIDE SEQUENCE [LARGE SCALE GENOMIC DNA]</scope>
    <source>
        <strain>O157:H7 / Sakai / RIMD 0509952 / EHEC</strain>
    </source>
</reference>
<accession>Q8X769</accession>
<evidence type="ECO:0000255" key="1">
    <source>
        <dbReference type="HAMAP-Rule" id="MF_00743"/>
    </source>
</evidence>
<sequence>MNTVRSEKDSMGAIDVPADKLWGAQTQRSLEHFRISTEKMPTSLIHALALTKRAAAKVNEDLGLLSEEKASAIRQAADEVLAGQHDDEFPLAIWQTGSGTQSNMNMNEVLANRASELLGGVRGMERKVHPNDDVNKSQSSNDVFPTAMHVAALLALRKQLIPQLKTLTQTLSEKSRAFADIVKIGRTHLQDATPLTLGQEISGWVAMLEHNLKHIEYSLPHVAELALGGTAVGTGLNTHPEYARRVADELAVITCAPFVTAPNKFEALATCDALVQAHGALKGLAASLMKIANDVRWLASGPRCGIGEISIPENEPGSSIMPGKVNPTQCEALTMLCCQVMGNDVAINMGGASGNFELNVFRPMVIHNFLQSVRLLADGMESFNKHCAVGIEPNRERINQLLNESLMLVTALNTHIGYDKAAEIAKKAHKEGLTLKAAALALGYLSEAEFDSWVRPEQMVGSMKAGR</sequence>
<dbReference type="EC" id="4.2.1.2" evidence="1"/>
<dbReference type="EMBL" id="AE005174">
    <property type="protein sequence ID" value="AAG56598.1"/>
    <property type="molecule type" value="Genomic_DNA"/>
</dbReference>
<dbReference type="EMBL" id="BA000007">
    <property type="protein sequence ID" value="BAB35740.1"/>
    <property type="molecule type" value="Genomic_DNA"/>
</dbReference>
<dbReference type="PIR" id="B85767">
    <property type="entry name" value="B85767"/>
</dbReference>
<dbReference type="PIR" id="E90918">
    <property type="entry name" value="E90918"/>
</dbReference>
<dbReference type="RefSeq" id="NP_310344.1">
    <property type="nucleotide sequence ID" value="NC_002695.1"/>
</dbReference>
<dbReference type="RefSeq" id="WP_001099102.1">
    <property type="nucleotide sequence ID" value="NZ_VOAI01000007.1"/>
</dbReference>
<dbReference type="SMR" id="Q8X769"/>
<dbReference type="STRING" id="155864.Z2614"/>
<dbReference type="GeneID" id="75204455"/>
<dbReference type="GeneID" id="913708"/>
<dbReference type="KEGG" id="ece:Z2614"/>
<dbReference type="KEGG" id="ecs:ECs_2317"/>
<dbReference type="PATRIC" id="fig|386585.9.peg.2427"/>
<dbReference type="eggNOG" id="COG0114">
    <property type="taxonomic scope" value="Bacteria"/>
</dbReference>
<dbReference type="HOGENOM" id="CLU_021594_4_1_6"/>
<dbReference type="OMA" id="AKWRAQT"/>
<dbReference type="SABIO-RK" id="Q8X769"/>
<dbReference type="UniPathway" id="UPA00223">
    <property type="reaction ID" value="UER01007"/>
</dbReference>
<dbReference type="Proteomes" id="UP000000558">
    <property type="component" value="Chromosome"/>
</dbReference>
<dbReference type="Proteomes" id="UP000002519">
    <property type="component" value="Chromosome"/>
</dbReference>
<dbReference type="GO" id="GO:0005737">
    <property type="term" value="C:cytoplasm"/>
    <property type="evidence" value="ECO:0007669"/>
    <property type="project" value="UniProtKB-SubCell"/>
</dbReference>
<dbReference type="GO" id="GO:0004333">
    <property type="term" value="F:fumarate hydratase activity"/>
    <property type="evidence" value="ECO:0007669"/>
    <property type="project" value="UniProtKB-UniRule"/>
</dbReference>
<dbReference type="GO" id="GO:0006106">
    <property type="term" value="P:fumarate metabolic process"/>
    <property type="evidence" value="ECO:0007669"/>
    <property type="project" value="InterPro"/>
</dbReference>
<dbReference type="GO" id="GO:0006108">
    <property type="term" value="P:malate metabolic process"/>
    <property type="evidence" value="ECO:0007669"/>
    <property type="project" value="TreeGrafter"/>
</dbReference>
<dbReference type="GO" id="GO:0006099">
    <property type="term" value="P:tricarboxylic acid cycle"/>
    <property type="evidence" value="ECO:0007669"/>
    <property type="project" value="UniProtKB-UniRule"/>
</dbReference>
<dbReference type="CDD" id="cd01362">
    <property type="entry name" value="Fumarase_classII"/>
    <property type="match status" value="1"/>
</dbReference>
<dbReference type="FunFam" id="1.10.40.30:FF:000002">
    <property type="entry name" value="Fumarate hydratase class II"/>
    <property type="match status" value="1"/>
</dbReference>
<dbReference type="FunFam" id="1.10.275.10:FF:000001">
    <property type="entry name" value="Fumarate hydratase, mitochondrial"/>
    <property type="match status" value="1"/>
</dbReference>
<dbReference type="FunFam" id="1.20.200.10:FF:000001">
    <property type="entry name" value="Fumarate hydratase, mitochondrial"/>
    <property type="match status" value="1"/>
</dbReference>
<dbReference type="Gene3D" id="1.10.40.30">
    <property type="entry name" value="Fumarase/aspartase (C-terminal domain)"/>
    <property type="match status" value="1"/>
</dbReference>
<dbReference type="Gene3D" id="1.20.200.10">
    <property type="entry name" value="Fumarase/aspartase (Central domain)"/>
    <property type="match status" value="1"/>
</dbReference>
<dbReference type="Gene3D" id="1.10.275.10">
    <property type="entry name" value="Fumarase/aspartase (N-terminal domain)"/>
    <property type="match status" value="1"/>
</dbReference>
<dbReference type="HAMAP" id="MF_00743">
    <property type="entry name" value="FumaraseC"/>
    <property type="match status" value="1"/>
</dbReference>
<dbReference type="InterPro" id="IPR005677">
    <property type="entry name" value="Fum_hydII"/>
</dbReference>
<dbReference type="InterPro" id="IPR024083">
    <property type="entry name" value="Fumarase/histidase_N"/>
</dbReference>
<dbReference type="InterPro" id="IPR018951">
    <property type="entry name" value="Fumarase_C_C"/>
</dbReference>
<dbReference type="InterPro" id="IPR020557">
    <property type="entry name" value="Fumarate_lyase_CS"/>
</dbReference>
<dbReference type="InterPro" id="IPR000362">
    <property type="entry name" value="Fumarate_lyase_fam"/>
</dbReference>
<dbReference type="InterPro" id="IPR022761">
    <property type="entry name" value="Fumarate_lyase_N"/>
</dbReference>
<dbReference type="InterPro" id="IPR008948">
    <property type="entry name" value="L-Aspartase-like"/>
</dbReference>
<dbReference type="NCBIfam" id="TIGR00979">
    <property type="entry name" value="fumC_II"/>
    <property type="match status" value="1"/>
</dbReference>
<dbReference type="NCBIfam" id="NF008909">
    <property type="entry name" value="PRK12273.1"/>
    <property type="match status" value="1"/>
</dbReference>
<dbReference type="PANTHER" id="PTHR11444">
    <property type="entry name" value="ASPARTATEAMMONIA/ARGININOSUCCINATE/ADENYLOSUCCINATE LYASE"/>
    <property type="match status" value="1"/>
</dbReference>
<dbReference type="PANTHER" id="PTHR11444:SF1">
    <property type="entry name" value="FUMARATE HYDRATASE, MITOCHONDRIAL"/>
    <property type="match status" value="1"/>
</dbReference>
<dbReference type="Pfam" id="PF10415">
    <property type="entry name" value="FumaraseC_C"/>
    <property type="match status" value="1"/>
</dbReference>
<dbReference type="Pfam" id="PF00206">
    <property type="entry name" value="Lyase_1"/>
    <property type="match status" value="1"/>
</dbReference>
<dbReference type="PRINTS" id="PR00149">
    <property type="entry name" value="FUMRATELYASE"/>
</dbReference>
<dbReference type="SUPFAM" id="SSF48557">
    <property type="entry name" value="L-aspartase-like"/>
    <property type="match status" value="1"/>
</dbReference>
<dbReference type="PROSITE" id="PS00163">
    <property type="entry name" value="FUMARATE_LYASES"/>
    <property type="match status" value="1"/>
</dbReference>
<comment type="function">
    <text evidence="1">Involved in the TCA cycle. Catalyzes the stereospecific interconversion of fumarate to L-malate.</text>
</comment>
<comment type="catalytic activity">
    <reaction evidence="1">
        <text>(S)-malate = fumarate + H2O</text>
        <dbReference type="Rhea" id="RHEA:12460"/>
        <dbReference type="ChEBI" id="CHEBI:15377"/>
        <dbReference type="ChEBI" id="CHEBI:15589"/>
        <dbReference type="ChEBI" id="CHEBI:29806"/>
        <dbReference type="EC" id="4.2.1.2"/>
    </reaction>
</comment>
<comment type="pathway">
    <text evidence="1">Carbohydrate metabolism; tricarboxylic acid cycle; (S)-malate from fumarate: step 1/1.</text>
</comment>
<comment type="subunit">
    <text evidence="1">Homotetramer.</text>
</comment>
<comment type="subcellular location">
    <subcellularLocation>
        <location evidence="1">Cytoplasm</location>
    </subcellularLocation>
</comment>
<comment type="miscellaneous">
    <text evidence="1">There are 2 substrate-binding sites: the catalytic A site, and the non-catalytic B site that may play a role in the transfer of substrate or product between the active site and the solvent. Alternatively, the B site may bind allosteric effectors.</text>
</comment>
<comment type="similarity">
    <text evidence="1">Belongs to the class-II fumarase/aspartase family. Fumarase subfamily.</text>
</comment>
<keyword id="KW-0963">Cytoplasm</keyword>
<keyword id="KW-0456">Lyase</keyword>
<keyword id="KW-1185">Reference proteome</keyword>
<keyword id="KW-0816">Tricarboxylic acid cycle</keyword>